<accession>A7Z7G4</accession>
<keyword id="KW-0963">Cytoplasm</keyword>
<keyword id="KW-0444">Lipid biosynthesis</keyword>
<keyword id="KW-0443">Lipid metabolism</keyword>
<keyword id="KW-0479">Metal-binding</keyword>
<keyword id="KW-0520">NAD</keyword>
<keyword id="KW-0521">NADP</keyword>
<keyword id="KW-0533">Nickel</keyword>
<keyword id="KW-0560">Oxidoreductase</keyword>
<keyword id="KW-0594">Phospholipid biosynthesis</keyword>
<keyword id="KW-1208">Phospholipid metabolism</keyword>
<feature type="chain" id="PRO_0000350636" description="Glycerol-1-phosphate dehydrogenase [NAD(P)+]">
    <location>
        <begin position="1"/>
        <end position="394"/>
    </location>
</feature>
<feature type="binding site" evidence="1">
    <location>
        <position position="54"/>
    </location>
    <ligand>
        <name>NAD(+)</name>
        <dbReference type="ChEBI" id="CHEBI:57540"/>
    </ligand>
</feature>
<feature type="binding site" evidence="1">
    <location>
        <begin position="116"/>
        <end position="120"/>
    </location>
    <ligand>
        <name>NAD(+)</name>
        <dbReference type="ChEBI" id="CHEBI:57540"/>
    </ligand>
</feature>
<feature type="binding site" evidence="1">
    <location>
        <begin position="138"/>
        <end position="141"/>
    </location>
    <ligand>
        <name>NAD(+)</name>
        <dbReference type="ChEBI" id="CHEBI:57540"/>
    </ligand>
</feature>
<feature type="binding site" evidence="1">
    <location>
        <position position="143"/>
    </location>
    <ligand>
        <name>substrate</name>
    </ligand>
</feature>
<feature type="binding site" evidence="1">
    <location>
        <position position="147"/>
    </location>
    <ligand>
        <name>NAD(+)</name>
        <dbReference type="ChEBI" id="CHEBI:57540"/>
    </ligand>
</feature>
<feature type="binding site" evidence="1">
    <location>
        <position position="190"/>
    </location>
    <ligand>
        <name>Ni(2+)</name>
        <dbReference type="ChEBI" id="CHEBI:49786"/>
        <note>catalytic</note>
    </ligand>
</feature>
<feature type="binding site" evidence="1">
    <location>
        <position position="190"/>
    </location>
    <ligand>
        <name>substrate</name>
    </ligand>
</feature>
<feature type="binding site" evidence="1">
    <location>
        <position position="270"/>
    </location>
    <ligand>
        <name>Ni(2+)</name>
        <dbReference type="ChEBI" id="CHEBI:49786"/>
        <note>catalytic</note>
    </ligand>
</feature>
<feature type="binding site" evidence="1">
    <location>
        <position position="274"/>
    </location>
    <ligand>
        <name>substrate</name>
    </ligand>
</feature>
<feature type="binding site" evidence="1">
    <location>
        <position position="290"/>
    </location>
    <ligand>
        <name>Ni(2+)</name>
        <dbReference type="ChEBI" id="CHEBI:49786"/>
        <note>catalytic</note>
    </ligand>
</feature>
<proteinExistence type="inferred from homology"/>
<name>G1PDH_BACVZ</name>
<protein>
    <recommendedName>
        <fullName evidence="1">Glycerol-1-phosphate dehydrogenase [NAD(P)+]</fullName>
        <shortName evidence="1">G1P dehydrogenase</shortName>
        <shortName evidence="1">G1PDH</shortName>
        <ecNumber evidence="1">1.1.1.261</ecNumber>
    </recommendedName>
    <alternativeName>
        <fullName evidence="1">Enantiomeric glycerophosphate synthase</fullName>
    </alternativeName>
    <alternativeName>
        <fullName evidence="1">sn-glycerol-1-phosphate dehydrogenase</fullName>
    </alternativeName>
</protein>
<organism>
    <name type="scientific">Bacillus velezensis (strain DSM 23117 / BGSC 10A6 / LMG 26770 / FZB42)</name>
    <name type="common">Bacillus amyloliquefaciens subsp. plantarum</name>
    <dbReference type="NCBI Taxonomy" id="326423"/>
    <lineage>
        <taxon>Bacteria</taxon>
        <taxon>Bacillati</taxon>
        <taxon>Bacillota</taxon>
        <taxon>Bacilli</taxon>
        <taxon>Bacillales</taxon>
        <taxon>Bacillaceae</taxon>
        <taxon>Bacillus</taxon>
        <taxon>Bacillus amyloliquefaciens group</taxon>
    </lineage>
</organism>
<gene>
    <name evidence="1" type="primary">egsA</name>
    <name type="synonym">araM</name>
    <name type="ordered locus">RBAM_025820</name>
</gene>
<evidence type="ECO:0000255" key="1">
    <source>
        <dbReference type="HAMAP-Rule" id="MF_00497"/>
    </source>
</evidence>
<sequence>MKRSPEDIQSEFDKEGASRSPIQIEDIVIGANAKEELLRFLQKKCWNHPVIVCDRNTYEAAGRLLADELRAGGIKASKVIIPEHEAGAAAADERTLVYTLINLAEETDVIIAAGAGTIHDITRFAAYQRGLPFISFPTAPSVDGFTSAGAPLILNGIKTTIQTKAPIALFADTNVLKEAPRSMTAAGFGDMLGKITSLADWEISRRLAGEPYSEAGAKLVKDALWQCIDHRAAIAMGTEAGIQILMEALIVSGLVMLALDHSRPASGGEHHISHWIEMEMLKAKQPPILHGAKVGCACAVLSDTYKELACHEKLAELPPHFREAIQSAYEGLPDGKTIAGWLASAGGPACFDEIGVKQDLVSDALKHAHTLRDRYTGLTIINENAALFAHHLHQ</sequence>
<comment type="function">
    <text evidence="1">Catalyzes the NAD(P)H-dependent reduction of dihydroxyacetonephosphate (DHAP or glycerone phosphate) to glycerol 1-phosphate (G1P). The G1P thus generated is probably used for the synthesis of phosphoglycerolipids in Gram-positive bacterial species.</text>
</comment>
<comment type="catalytic activity">
    <reaction evidence="1">
        <text>sn-glycerol 1-phosphate + NAD(+) = dihydroxyacetone phosphate + NADH + H(+)</text>
        <dbReference type="Rhea" id="RHEA:21412"/>
        <dbReference type="ChEBI" id="CHEBI:15378"/>
        <dbReference type="ChEBI" id="CHEBI:57540"/>
        <dbReference type="ChEBI" id="CHEBI:57642"/>
        <dbReference type="ChEBI" id="CHEBI:57685"/>
        <dbReference type="ChEBI" id="CHEBI:57945"/>
        <dbReference type="EC" id="1.1.1.261"/>
    </reaction>
</comment>
<comment type="catalytic activity">
    <reaction evidence="1">
        <text>sn-glycerol 1-phosphate + NADP(+) = dihydroxyacetone phosphate + NADPH + H(+)</text>
        <dbReference type="Rhea" id="RHEA:21416"/>
        <dbReference type="ChEBI" id="CHEBI:15378"/>
        <dbReference type="ChEBI" id="CHEBI:57642"/>
        <dbReference type="ChEBI" id="CHEBI:57685"/>
        <dbReference type="ChEBI" id="CHEBI:57783"/>
        <dbReference type="ChEBI" id="CHEBI:58349"/>
        <dbReference type="EC" id="1.1.1.261"/>
    </reaction>
</comment>
<comment type="cofactor">
    <cofactor evidence="1">
        <name>Ni(2+)</name>
        <dbReference type="ChEBI" id="CHEBI:49786"/>
    </cofactor>
    <text evidence="1">Binds 1 nickel ion per subunit.</text>
</comment>
<comment type="subunit">
    <text evidence="1">Homodimer.</text>
</comment>
<comment type="subcellular location">
    <subcellularLocation>
        <location evidence="1">Cytoplasm</location>
    </subcellularLocation>
</comment>
<comment type="similarity">
    <text evidence="1">Belongs to the glycerol-1-phosphate dehydrogenase family.</text>
</comment>
<dbReference type="EC" id="1.1.1.261" evidence="1"/>
<dbReference type="EMBL" id="CP000560">
    <property type="protein sequence ID" value="ABS74940.1"/>
    <property type="molecule type" value="Genomic_DNA"/>
</dbReference>
<dbReference type="RefSeq" id="WP_012118144.1">
    <property type="nucleotide sequence ID" value="NC_009725.2"/>
</dbReference>
<dbReference type="SMR" id="A7Z7G4"/>
<dbReference type="GeneID" id="93081724"/>
<dbReference type="KEGG" id="bay:RBAM_025820"/>
<dbReference type="HOGENOM" id="CLU_038362_1_0_9"/>
<dbReference type="Proteomes" id="UP000001120">
    <property type="component" value="Chromosome"/>
</dbReference>
<dbReference type="GO" id="GO:0005737">
    <property type="term" value="C:cytoplasm"/>
    <property type="evidence" value="ECO:0007669"/>
    <property type="project" value="UniProtKB-SubCell"/>
</dbReference>
<dbReference type="GO" id="GO:0106357">
    <property type="term" value="F:glycerol-1-phosphate dehydrogenase (NAD+) activity"/>
    <property type="evidence" value="ECO:0007669"/>
    <property type="project" value="RHEA"/>
</dbReference>
<dbReference type="GO" id="GO:0106358">
    <property type="term" value="F:glycerol-1-phosphate dehydrogenase (NADP+) activity"/>
    <property type="evidence" value="ECO:0007669"/>
    <property type="project" value="RHEA"/>
</dbReference>
<dbReference type="GO" id="GO:0046872">
    <property type="term" value="F:metal ion binding"/>
    <property type="evidence" value="ECO:0007669"/>
    <property type="project" value="UniProtKB-KW"/>
</dbReference>
<dbReference type="GO" id="GO:0006650">
    <property type="term" value="P:glycerophospholipid metabolic process"/>
    <property type="evidence" value="ECO:0007669"/>
    <property type="project" value="UniProtKB-UniRule"/>
</dbReference>
<dbReference type="GO" id="GO:0008654">
    <property type="term" value="P:phospholipid biosynthetic process"/>
    <property type="evidence" value="ECO:0007669"/>
    <property type="project" value="UniProtKB-KW"/>
</dbReference>
<dbReference type="CDD" id="cd08175">
    <property type="entry name" value="G1PDH"/>
    <property type="match status" value="1"/>
</dbReference>
<dbReference type="Gene3D" id="3.40.50.1970">
    <property type="match status" value="1"/>
</dbReference>
<dbReference type="Gene3D" id="1.20.1090.10">
    <property type="entry name" value="Dehydroquinate synthase-like - alpha domain"/>
    <property type="match status" value="1"/>
</dbReference>
<dbReference type="HAMAP" id="MF_00497_B">
    <property type="entry name" value="G1P_dehydrogenase_B"/>
    <property type="match status" value="1"/>
</dbReference>
<dbReference type="InterPro" id="IPR023003">
    <property type="entry name" value="G1P_dehydrogenase_bac"/>
</dbReference>
<dbReference type="InterPro" id="IPR032837">
    <property type="entry name" value="G1PDH"/>
</dbReference>
<dbReference type="InterPro" id="IPR016205">
    <property type="entry name" value="Glycerol_DH"/>
</dbReference>
<dbReference type="PANTHER" id="PTHR43616">
    <property type="entry name" value="GLYCEROL DEHYDROGENASE"/>
    <property type="match status" value="1"/>
</dbReference>
<dbReference type="PANTHER" id="PTHR43616:SF5">
    <property type="entry name" value="GLYCEROL DEHYDROGENASE 1"/>
    <property type="match status" value="1"/>
</dbReference>
<dbReference type="Pfam" id="PF13685">
    <property type="entry name" value="Fe-ADH_2"/>
    <property type="match status" value="1"/>
</dbReference>
<dbReference type="SUPFAM" id="SSF56796">
    <property type="entry name" value="Dehydroquinate synthase-like"/>
    <property type="match status" value="1"/>
</dbReference>
<reference key="1">
    <citation type="journal article" date="2007" name="Nat. Biotechnol.">
        <title>Comparative analysis of the complete genome sequence of the plant growth-promoting bacterium Bacillus amyloliquefaciens FZB42.</title>
        <authorList>
            <person name="Chen X.H."/>
            <person name="Koumoutsi A."/>
            <person name="Scholz R."/>
            <person name="Eisenreich A."/>
            <person name="Schneider K."/>
            <person name="Heinemeyer I."/>
            <person name="Morgenstern B."/>
            <person name="Voss B."/>
            <person name="Hess W.R."/>
            <person name="Reva O."/>
            <person name="Junge H."/>
            <person name="Voigt B."/>
            <person name="Jungblut P.R."/>
            <person name="Vater J."/>
            <person name="Suessmuth R."/>
            <person name="Liesegang H."/>
            <person name="Strittmatter A."/>
            <person name="Gottschalk G."/>
            <person name="Borriss R."/>
        </authorList>
    </citation>
    <scope>NUCLEOTIDE SEQUENCE [LARGE SCALE GENOMIC DNA]</scope>
    <source>
        <strain>DSM 23117 / BGSC 10A6 / LMG 26770 / FZB42</strain>
    </source>
</reference>